<proteinExistence type="inferred from homology"/>
<protein>
    <recommendedName>
        <fullName evidence="1">Probable cell division protein WhiA</fullName>
    </recommendedName>
</protein>
<organism>
    <name type="scientific">Mycoplasma genitalium (strain ATCC 33530 / DSM 19775 / NCTC 10195 / G37)</name>
    <name type="common">Mycoplasmoides genitalium</name>
    <dbReference type="NCBI Taxonomy" id="243273"/>
    <lineage>
        <taxon>Bacteria</taxon>
        <taxon>Bacillati</taxon>
        <taxon>Mycoplasmatota</taxon>
        <taxon>Mycoplasmoidales</taxon>
        <taxon>Mycoplasmoidaceae</taxon>
        <taxon>Mycoplasmoides</taxon>
    </lineage>
</organism>
<dbReference type="EMBL" id="L43967">
    <property type="protein sequence ID" value="AAC71321.1"/>
    <property type="molecule type" value="Genomic_DNA"/>
</dbReference>
<dbReference type="EMBL" id="U02170">
    <property type="protein sequence ID" value="AAD12452.1"/>
    <property type="molecule type" value="Genomic_DNA"/>
</dbReference>
<dbReference type="PIR" id="D64211">
    <property type="entry name" value="D64211"/>
</dbReference>
<dbReference type="RefSeq" id="WP_010869332.1">
    <property type="nucleotide sequence ID" value="NC_000908.2"/>
</dbReference>
<dbReference type="SMR" id="P47349"/>
<dbReference type="FunCoup" id="P47349">
    <property type="interactions" value="7"/>
</dbReference>
<dbReference type="STRING" id="243273.MG_103"/>
<dbReference type="GeneID" id="88282226"/>
<dbReference type="KEGG" id="mge:MG_103"/>
<dbReference type="eggNOG" id="COG1481">
    <property type="taxonomic scope" value="Bacteria"/>
</dbReference>
<dbReference type="HOGENOM" id="CLU_993285_0_0_14"/>
<dbReference type="InParanoid" id="P47349"/>
<dbReference type="OrthoDB" id="401278at2"/>
<dbReference type="BioCyc" id="MGEN243273:G1GJ2-115-MONOMER"/>
<dbReference type="Proteomes" id="UP000000807">
    <property type="component" value="Chromosome"/>
</dbReference>
<dbReference type="GO" id="GO:0003677">
    <property type="term" value="F:DNA binding"/>
    <property type="evidence" value="ECO:0007669"/>
    <property type="project" value="UniProtKB-UniRule"/>
</dbReference>
<dbReference type="GO" id="GO:0051301">
    <property type="term" value="P:cell division"/>
    <property type="evidence" value="ECO:0007669"/>
    <property type="project" value="UniProtKB-UniRule"/>
</dbReference>
<dbReference type="GO" id="GO:0043937">
    <property type="term" value="P:regulation of sporulation"/>
    <property type="evidence" value="ECO:0000318"/>
    <property type="project" value="GO_Central"/>
</dbReference>
<dbReference type="Gene3D" id="3.10.28.10">
    <property type="entry name" value="Homing endonucleases"/>
    <property type="match status" value="1"/>
</dbReference>
<dbReference type="HAMAP" id="MF_01420">
    <property type="entry name" value="HTH_type_WhiA"/>
    <property type="match status" value="1"/>
</dbReference>
<dbReference type="InterPro" id="IPR027434">
    <property type="entry name" value="Homing_endonucl"/>
</dbReference>
<dbReference type="InterPro" id="IPR003802">
    <property type="entry name" value="Sporulation_regulator_WhiA"/>
</dbReference>
<dbReference type="InterPro" id="IPR023054">
    <property type="entry name" value="Sporulation_regulator_WhiA_C"/>
</dbReference>
<dbReference type="InterPro" id="IPR039518">
    <property type="entry name" value="WhiA_LAGLIDADG_dom"/>
</dbReference>
<dbReference type="NCBIfam" id="TIGR00647">
    <property type="entry name" value="DNA_bind_WhiA"/>
    <property type="match status" value="1"/>
</dbReference>
<dbReference type="PANTHER" id="PTHR37307">
    <property type="entry name" value="CELL DIVISION PROTEIN WHIA-RELATED"/>
    <property type="match status" value="1"/>
</dbReference>
<dbReference type="PANTHER" id="PTHR37307:SF1">
    <property type="entry name" value="CELL DIVISION PROTEIN WHIA-RELATED"/>
    <property type="match status" value="1"/>
</dbReference>
<dbReference type="Pfam" id="PF02650">
    <property type="entry name" value="HTH_WhiA"/>
    <property type="match status" value="1"/>
</dbReference>
<dbReference type="Pfam" id="PF14527">
    <property type="entry name" value="LAGLIDADG_WhiA"/>
    <property type="match status" value="1"/>
</dbReference>
<dbReference type="SUPFAM" id="SSF55608">
    <property type="entry name" value="Homing endonucleases"/>
    <property type="match status" value="1"/>
</dbReference>
<accession>P47349</accession>
<accession>Q49293</accession>
<evidence type="ECO:0000255" key="1">
    <source>
        <dbReference type="HAMAP-Rule" id="MF_01420"/>
    </source>
</evidence>
<evidence type="ECO:0000305" key="2"/>
<reference key="1">
    <citation type="journal article" date="1995" name="Science">
        <title>The minimal gene complement of Mycoplasma genitalium.</title>
        <authorList>
            <person name="Fraser C.M."/>
            <person name="Gocayne J.D."/>
            <person name="White O."/>
            <person name="Adams M.D."/>
            <person name="Clayton R.A."/>
            <person name="Fleischmann R.D."/>
            <person name="Bult C.J."/>
            <person name="Kerlavage A.R."/>
            <person name="Sutton G.G."/>
            <person name="Kelley J.M."/>
            <person name="Fritchman J.L."/>
            <person name="Weidman J.F."/>
            <person name="Small K.V."/>
            <person name="Sandusky M."/>
            <person name="Fuhrmann J.L."/>
            <person name="Nguyen D.T."/>
            <person name="Utterback T.R."/>
            <person name="Saudek D.M."/>
            <person name="Phillips C.A."/>
            <person name="Merrick J.M."/>
            <person name="Tomb J.-F."/>
            <person name="Dougherty B.A."/>
            <person name="Bott K.F."/>
            <person name="Hu P.-C."/>
            <person name="Lucier T.S."/>
            <person name="Peterson S.N."/>
            <person name="Smith H.O."/>
            <person name="Hutchison C.A. III"/>
            <person name="Venter J.C."/>
        </authorList>
    </citation>
    <scope>NUCLEOTIDE SEQUENCE [LARGE SCALE GENOMIC DNA]</scope>
    <source>
        <strain>ATCC 33530 / DSM 19775 / NCTC 10195 / G37</strain>
    </source>
</reference>
<reference key="2">
    <citation type="journal article" date="1993" name="J. Bacteriol.">
        <title>A survey of the Mycoplasma genitalium genome by using random sequencing.</title>
        <authorList>
            <person name="Peterson S.N."/>
            <person name="Hu P.-C."/>
            <person name="Bott K.F."/>
            <person name="Hutchison C.A. III"/>
        </authorList>
    </citation>
    <scope>NUCLEOTIDE SEQUENCE [GENOMIC DNA] OF 86-208</scope>
    <source>
        <strain>ATCC 33530 / DSM 19775 / NCTC 10195 / G37</strain>
    </source>
</reference>
<sequence length="280" mass="32864">MTFSTQIKAELVQNKLIDKHWNVFLAGFFQNNLKLLYNRNWSFKVQSEALKEQFVQNLKFDFKTKASKKYFLFEFNADINVINTLLKLDVTTSELVVKQVYLIAAFLSGGSVSDLINSNNFHLQISSNNEFQIQQLLKLFSFFKKTVKQNQLVVYLKSYEKICNFLKLIQAFDGYLAFENKQLEKSFTLNQLRKSNLEVANLMKTIRSNNQTNQLQLKSFIKSSSFAKRPLNFQRYCLIKSDHPDWSLEQIANFFFTKYNIKISRSGIQHFSVNLKKLCQ</sequence>
<gene>
    <name evidence="1" type="primary">whiA</name>
    <name type="ordered locus">MG103</name>
</gene>
<comment type="function">
    <text evidence="1">Involved in cell division and chromosome segregation.</text>
</comment>
<comment type="similarity">
    <text evidence="1">Belongs to the WhiA family.</text>
</comment>
<keyword id="KW-0131">Cell cycle</keyword>
<keyword id="KW-0132">Cell division</keyword>
<keyword id="KW-0238">DNA-binding</keyword>
<keyword id="KW-1185">Reference proteome</keyword>
<name>WHIA_MYCGE</name>
<feature type="chain" id="PRO_0000210415" description="Probable cell division protein WhiA">
    <location>
        <begin position="1"/>
        <end position="280"/>
    </location>
</feature>
<feature type="DNA-binding region" description="H-T-H motif" evidence="1">
    <location>
        <begin position="247"/>
        <end position="279"/>
    </location>
</feature>
<feature type="sequence conflict" description="In Ref. 2; AAD12452." evidence="2" ref="2">
    <original>L</original>
    <variation>F</variation>
    <location>
        <position position="86"/>
    </location>
</feature>